<keyword id="KW-0030">Aminoacyl-tRNA synthetase</keyword>
<keyword id="KW-0067">ATP-binding</keyword>
<keyword id="KW-0963">Cytoplasm</keyword>
<keyword id="KW-0436">Ligase</keyword>
<keyword id="KW-0547">Nucleotide-binding</keyword>
<keyword id="KW-0648">Protein biosynthesis</keyword>
<keyword id="KW-1185">Reference proteome</keyword>
<sequence length="588" mass="66052">MRSIYCGQVTSSHVEQTVTLCGWVHRRRDLGGLIFIDMRDREGIVQVFFDPDKPEAFALASELRNEFCIRVTGVVRARPDSQINKDMATGEVEIFAHGLEIINRAEPLPLDFNQTNTEEQRLKYRYLDLRRPEMAASLKTRARITSFVRRYMDEHGFLDIETPMLTKATPEGARDYLVPSRVHKGKFYALPQSPQLFKQLLMMSGFDRYYQIVKCFRDEDLRADRQPEFTQIDVETSFLNAEQVRELMENLIRGLWQNIIGVDLGQFPIMTFDEAMRRYGSDKPDLRNPMEMVDIADLLKDVSFAVFAGPANDPKGRVAALRVPDGAQLSRKQIDEYTQFVSIYGAKGLAWMKVNQADSGLAGVQSPVAKFLNDEIVREILSRTSAQDGDIIFFGADSKKVVCDAIGALRLKLARDLDLVENCWKPLWVVDFPMFEEDGEGGVTAMHHPFTAPKDFTPAQLEADPLAAYANAYDMVINGYEVGGGSVRIHRGDMQQTVFRAIGISEAEQKEKFGFLLDALKFGTPPHAGLAFGLDRLTMLLTGTDNIRDVIAFPKTTAAACLMTDAPSFANQQQLSELAIQTTVKAAE</sequence>
<organism>
    <name type="scientific">Tolumonas auensis (strain DSM 9187 / NBRC 110442 / TA 4)</name>
    <dbReference type="NCBI Taxonomy" id="595494"/>
    <lineage>
        <taxon>Bacteria</taxon>
        <taxon>Pseudomonadati</taxon>
        <taxon>Pseudomonadota</taxon>
        <taxon>Gammaproteobacteria</taxon>
        <taxon>Aeromonadales</taxon>
        <taxon>Aeromonadaceae</taxon>
        <taxon>Tolumonas</taxon>
    </lineage>
</organism>
<evidence type="ECO:0000255" key="1">
    <source>
        <dbReference type="HAMAP-Rule" id="MF_00044"/>
    </source>
</evidence>
<feature type="chain" id="PRO_1000202170" description="Aspartate--tRNA ligase">
    <location>
        <begin position="1"/>
        <end position="588"/>
    </location>
</feature>
<feature type="region of interest" description="Aspartate" evidence="1">
    <location>
        <begin position="195"/>
        <end position="198"/>
    </location>
</feature>
<feature type="binding site" evidence="1">
    <location>
        <position position="171"/>
    </location>
    <ligand>
        <name>L-aspartate</name>
        <dbReference type="ChEBI" id="CHEBI:29991"/>
    </ligand>
</feature>
<feature type="binding site" evidence="1">
    <location>
        <begin position="217"/>
        <end position="219"/>
    </location>
    <ligand>
        <name>ATP</name>
        <dbReference type="ChEBI" id="CHEBI:30616"/>
    </ligand>
</feature>
<feature type="binding site" evidence="1">
    <location>
        <position position="217"/>
    </location>
    <ligand>
        <name>L-aspartate</name>
        <dbReference type="ChEBI" id="CHEBI:29991"/>
    </ligand>
</feature>
<feature type="binding site" evidence="1">
    <location>
        <position position="226"/>
    </location>
    <ligand>
        <name>ATP</name>
        <dbReference type="ChEBI" id="CHEBI:30616"/>
    </ligand>
</feature>
<feature type="binding site" evidence="1">
    <location>
        <position position="447"/>
    </location>
    <ligand>
        <name>L-aspartate</name>
        <dbReference type="ChEBI" id="CHEBI:29991"/>
    </ligand>
</feature>
<feature type="binding site" evidence="1">
    <location>
        <position position="481"/>
    </location>
    <ligand>
        <name>ATP</name>
        <dbReference type="ChEBI" id="CHEBI:30616"/>
    </ligand>
</feature>
<feature type="binding site" evidence="1">
    <location>
        <position position="488"/>
    </location>
    <ligand>
        <name>L-aspartate</name>
        <dbReference type="ChEBI" id="CHEBI:29991"/>
    </ligand>
</feature>
<feature type="binding site" evidence="1">
    <location>
        <begin position="533"/>
        <end position="536"/>
    </location>
    <ligand>
        <name>ATP</name>
        <dbReference type="ChEBI" id="CHEBI:30616"/>
    </ligand>
</feature>
<gene>
    <name evidence="1" type="primary">aspS</name>
    <name type="ordered locus">Tola_2715</name>
</gene>
<dbReference type="EC" id="6.1.1.12" evidence="1"/>
<dbReference type="EMBL" id="CP001616">
    <property type="protein sequence ID" value="ACQ94308.1"/>
    <property type="molecule type" value="Genomic_DNA"/>
</dbReference>
<dbReference type="RefSeq" id="WP_015879757.1">
    <property type="nucleotide sequence ID" value="NC_012691.1"/>
</dbReference>
<dbReference type="SMR" id="C4LBN4"/>
<dbReference type="STRING" id="595494.Tola_2715"/>
<dbReference type="KEGG" id="tau:Tola_2715"/>
<dbReference type="eggNOG" id="COG0173">
    <property type="taxonomic scope" value="Bacteria"/>
</dbReference>
<dbReference type="HOGENOM" id="CLU_014330_3_2_6"/>
<dbReference type="OrthoDB" id="9802326at2"/>
<dbReference type="Proteomes" id="UP000009073">
    <property type="component" value="Chromosome"/>
</dbReference>
<dbReference type="GO" id="GO:0005737">
    <property type="term" value="C:cytoplasm"/>
    <property type="evidence" value="ECO:0007669"/>
    <property type="project" value="UniProtKB-SubCell"/>
</dbReference>
<dbReference type="GO" id="GO:0004815">
    <property type="term" value="F:aspartate-tRNA ligase activity"/>
    <property type="evidence" value="ECO:0007669"/>
    <property type="project" value="UniProtKB-UniRule"/>
</dbReference>
<dbReference type="GO" id="GO:0005524">
    <property type="term" value="F:ATP binding"/>
    <property type="evidence" value="ECO:0007669"/>
    <property type="project" value="UniProtKB-UniRule"/>
</dbReference>
<dbReference type="GO" id="GO:0003676">
    <property type="term" value="F:nucleic acid binding"/>
    <property type="evidence" value="ECO:0007669"/>
    <property type="project" value="InterPro"/>
</dbReference>
<dbReference type="GO" id="GO:0006422">
    <property type="term" value="P:aspartyl-tRNA aminoacylation"/>
    <property type="evidence" value="ECO:0007669"/>
    <property type="project" value="UniProtKB-UniRule"/>
</dbReference>
<dbReference type="CDD" id="cd00777">
    <property type="entry name" value="AspRS_core"/>
    <property type="match status" value="1"/>
</dbReference>
<dbReference type="CDD" id="cd04317">
    <property type="entry name" value="EcAspRS_like_N"/>
    <property type="match status" value="1"/>
</dbReference>
<dbReference type="FunFam" id="2.40.50.140:FF:000080">
    <property type="entry name" value="Aspartate--tRNA ligase"/>
    <property type="match status" value="1"/>
</dbReference>
<dbReference type="Gene3D" id="3.30.930.10">
    <property type="entry name" value="Bira Bifunctional Protein, Domain 2"/>
    <property type="match status" value="1"/>
</dbReference>
<dbReference type="Gene3D" id="3.30.1360.30">
    <property type="entry name" value="GAD-like domain"/>
    <property type="match status" value="1"/>
</dbReference>
<dbReference type="Gene3D" id="2.40.50.140">
    <property type="entry name" value="Nucleic acid-binding proteins"/>
    <property type="match status" value="1"/>
</dbReference>
<dbReference type="HAMAP" id="MF_00044">
    <property type="entry name" value="Asp_tRNA_synth_type1"/>
    <property type="match status" value="1"/>
</dbReference>
<dbReference type="InterPro" id="IPR004364">
    <property type="entry name" value="Aa-tRNA-synt_II"/>
</dbReference>
<dbReference type="InterPro" id="IPR006195">
    <property type="entry name" value="aa-tRNA-synth_II"/>
</dbReference>
<dbReference type="InterPro" id="IPR045864">
    <property type="entry name" value="aa-tRNA-synth_II/BPL/LPL"/>
</dbReference>
<dbReference type="InterPro" id="IPR004524">
    <property type="entry name" value="Asp-tRNA-ligase_1"/>
</dbReference>
<dbReference type="InterPro" id="IPR047089">
    <property type="entry name" value="Asp-tRNA-ligase_1_N"/>
</dbReference>
<dbReference type="InterPro" id="IPR002312">
    <property type="entry name" value="Asp/Asn-tRNA-synth_IIb"/>
</dbReference>
<dbReference type="InterPro" id="IPR047090">
    <property type="entry name" value="AspRS_core"/>
</dbReference>
<dbReference type="InterPro" id="IPR004115">
    <property type="entry name" value="GAD-like_sf"/>
</dbReference>
<dbReference type="InterPro" id="IPR029351">
    <property type="entry name" value="GAD_dom"/>
</dbReference>
<dbReference type="InterPro" id="IPR012340">
    <property type="entry name" value="NA-bd_OB-fold"/>
</dbReference>
<dbReference type="InterPro" id="IPR004365">
    <property type="entry name" value="NA-bd_OB_tRNA"/>
</dbReference>
<dbReference type="NCBIfam" id="TIGR00459">
    <property type="entry name" value="aspS_bact"/>
    <property type="match status" value="1"/>
</dbReference>
<dbReference type="NCBIfam" id="NF001750">
    <property type="entry name" value="PRK00476.1"/>
    <property type="match status" value="1"/>
</dbReference>
<dbReference type="PANTHER" id="PTHR22594:SF5">
    <property type="entry name" value="ASPARTATE--TRNA LIGASE, MITOCHONDRIAL"/>
    <property type="match status" value="1"/>
</dbReference>
<dbReference type="PANTHER" id="PTHR22594">
    <property type="entry name" value="ASPARTYL/LYSYL-TRNA SYNTHETASE"/>
    <property type="match status" value="1"/>
</dbReference>
<dbReference type="Pfam" id="PF02938">
    <property type="entry name" value="GAD"/>
    <property type="match status" value="1"/>
</dbReference>
<dbReference type="Pfam" id="PF00152">
    <property type="entry name" value="tRNA-synt_2"/>
    <property type="match status" value="1"/>
</dbReference>
<dbReference type="Pfam" id="PF01336">
    <property type="entry name" value="tRNA_anti-codon"/>
    <property type="match status" value="1"/>
</dbReference>
<dbReference type="PRINTS" id="PR01042">
    <property type="entry name" value="TRNASYNTHASP"/>
</dbReference>
<dbReference type="SUPFAM" id="SSF55681">
    <property type="entry name" value="Class II aaRS and biotin synthetases"/>
    <property type="match status" value="1"/>
</dbReference>
<dbReference type="SUPFAM" id="SSF55261">
    <property type="entry name" value="GAD domain-like"/>
    <property type="match status" value="1"/>
</dbReference>
<dbReference type="SUPFAM" id="SSF50249">
    <property type="entry name" value="Nucleic acid-binding proteins"/>
    <property type="match status" value="1"/>
</dbReference>
<dbReference type="PROSITE" id="PS50862">
    <property type="entry name" value="AA_TRNA_LIGASE_II"/>
    <property type="match status" value="1"/>
</dbReference>
<reference key="1">
    <citation type="submission" date="2009-05" db="EMBL/GenBank/DDBJ databases">
        <title>Complete sequence of Tolumonas auensis DSM 9187.</title>
        <authorList>
            <consortium name="US DOE Joint Genome Institute"/>
            <person name="Lucas S."/>
            <person name="Copeland A."/>
            <person name="Lapidus A."/>
            <person name="Glavina del Rio T."/>
            <person name="Tice H."/>
            <person name="Bruce D."/>
            <person name="Goodwin L."/>
            <person name="Pitluck S."/>
            <person name="Chertkov O."/>
            <person name="Brettin T."/>
            <person name="Detter J.C."/>
            <person name="Han C."/>
            <person name="Larimer F."/>
            <person name="Land M."/>
            <person name="Hauser L."/>
            <person name="Kyrpides N."/>
            <person name="Mikhailova N."/>
            <person name="Spring S."/>
            <person name="Beller H."/>
        </authorList>
    </citation>
    <scope>NUCLEOTIDE SEQUENCE [LARGE SCALE GENOMIC DNA]</scope>
    <source>
        <strain>DSM 9187 / NBRC 110442 / TA 4</strain>
    </source>
</reference>
<proteinExistence type="inferred from homology"/>
<name>SYD_TOLAT</name>
<accession>C4LBN4</accession>
<comment type="function">
    <text evidence="1">Catalyzes the attachment of L-aspartate to tRNA(Asp) in a two-step reaction: L-aspartate is first activated by ATP to form Asp-AMP and then transferred to the acceptor end of tRNA(Asp).</text>
</comment>
<comment type="catalytic activity">
    <reaction evidence="1">
        <text>tRNA(Asp) + L-aspartate + ATP = L-aspartyl-tRNA(Asp) + AMP + diphosphate</text>
        <dbReference type="Rhea" id="RHEA:19649"/>
        <dbReference type="Rhea" id="RHEA-COMP:9660"/>
        <dbReference type="Rhea" id="RHEA-COMP:9678"/>
        <dbReference type="ChEBI" id="CHEBI:29991"/>
        <dbReference type="ChEBI" id="CHEBI:30616"/>
        <dbReference type="ChEBI" id="CHEBI:33019"/>
        <dbReference type="ChEBI" id="CHEBI:78442"/>
        <dbReference type="ChEBI" id="CHEBI:78516"/>
        <dbReference type="ChEBI" id="CHEBI:456215"/>
        <dbReference type="EC" id="6.1.1.12"/>
    </reaction>
</comment>
<comment type="subunit">
    <text evidence="1">Homodimer.</text>
</comment>
<comment type="subcellular location">
    <subcellularLocation>
        <location evidence="1">Cytoplasm</location>
    </subcellularLocation>
</comment>
<comment type="similarity">
    <text evidence="1">Belongs to the class-II aminoacyl-tRNA synthetase family. Type 1 subfamily.</text>
</comment>
<protein>
    <recommendedName>
        <fullName evidence="1">Aspartate--tRNA ligase</fullName>
        <ecNumber evidence="1">6.1.1.12</ecNumber>
    </recommendedName>
    <alternativeName>
        <fullName evidence="1">Aspartyl-tRNA synthetase</fullName>
        <shortName evidence="1">AspRS</shortName>
    </alternativeName>
</protein>